<dbReference type="EC" id="2.4.2.-" evidence="1"/>
<dbReference type="EC" id="2.4.2.22" evidence="1"/>
<dbReference type="EMBL" id="CR522870">
    <property type="protein sequence ID" value="CAG35409.1"/>
    <property type="molecule type" value="Genomic_DNA"/>
</dbReference>
<dbReference type="RefSeq" id="WP_011187925.1">
    <property type="nucleotide sequence ID" value="NC_006138.1"/>
</dbReference>
<dbReference type="SMR" id="Q6AQG4"/>
<dbReference type="STRING" id="177439.DP0680"/>
<dbReference type="KEGG" id="dps:DP0680"/>
<dbReference type="eggNOG" id="COG2236">
    <property type="taxonomic scope" value="Bacteria"/>
</dbReference>
<dbReference type="HOGENOM" id="CLU_080904_3_0_7"/>
<dbReference type="OrthoDB" id="9789690at2"/>
<dbReference type="UniPathway" id="UPA00602">
    <property type="reaction ID" value="UER00658"/>
</dbReference>
<dbReference type="UniPathway" id="UPA00909">
    <property type="reaction ID" value="UER00887"/>
</dbReference>
<dbReference type="Proteomes" id="UP000000602">
    <property type="component" value="Chromosome"/>
</dbReference>
<dbReference type="GO" id="GO:0005886">
    <property type="term" value="C:plasma membrane"/>
    <property type="evidence" value="ECO:0007669"/>
    <property type="project" value="UniProtKB-SubCell"/>
</dbReference>
<dbReference type="GO" id="GO:0052657">
    <property type="term" value="F:guanine phosphoribosyltransferase activity"/>
    <property type="evidence" value="ECO:0007669"/>
    <property type="project" value="RHEA"/>
</dbReference>
<dbReference type="GO" id="GO:0004422">
    <property type="term" value="F:hypoxanthine phosphoribosyltransferase activity"/>
    <property type="evidence" value="ECO:0007669"/>
    <property type="project" value="RHEA"/>
</dbReference>
<dbReference type="GO" id="GO:0046872">
    <property type="term" value="F:metal ion binding"/>
    <property type="evidence" value="ECO:0007669"/>
    <property type="project" value="UniProtKB-KW"/>
</dbReference>
<dbReference type="GO" id="GO:0000310">
    <property type="term" value="F:xanthine phosphoribosyltransferase activity"/>
    <property type="evidence" value="ECO:0007669"/>
    <property type="project" value="UniProtKB-EC"/>
</dbReference>
<dbReference type="GO" id="GO:0032263">
    <property type="term" value="P:GMP salvage"/>
    <property type="evidence" value="ECO:0007669"/>
    <property type="project" value="UniProtKB-UniPathway"/>
</dbReference>
<dbReference type="GO" id="GO:0006166">
    <property type="term" value="P:purine ribonucleoside salvage"/>
    <property type="evidence" value="ECO:0007669"/>
    <property type="project" value="UniProtKB-KW"/>
</dbReference>
<dbReference type="GO" id="GO:0032265">
    <property type="term" value="P:XMP salvage"/>
    <property type="evidence" value="ECO:0007669"/>
    <property type="project" value="UniProtKB-UniPathway"/>
</dbReference>
<dbReference type="CDD" id="cd06223">
    <property type="entry name" value="PRTases_typeI"/>
    <property type="match status" value="1"/>
</dbReference>
<dbReference type="Gene3D" id="3.40.50.2020">
    <property type="match status" value="1"/>
</dbReference>
<dbReference type="HAMAP" id="MF_01903">
    <property type="entry name" value="XGPRT"/>
    <property type="match status" value="1"/>
</dbReference>
<dbReference type="InterPro" id="IPR000836">
    <property type="entry name" value="PRibTrfase_dom"/>
</dbReference>
<dbReference type="InterPro" id="IPR029057">
    <property type="entry name" value="PRTase-like"/>
</dbReference>
<dbReference type="InterPro" id="IPR023747">
    <property type="entry name" value="Xanthine_Guanine_PRibTrfase"/>
</dbReference>
<dbReference type="NCBIfam" id="NF006613">
    <property type="entry name" value="PRK09177.1"/>
    <property type="match status" value="1"/>
</dbReference>
<dbReference type="PANTHER" id="PTHR39563">
    <property type="entry name" value="XANTHINE PHOSPHORIBOSYLTRANSFERASE"/>
    <property type="match status" value="1"/>
</dbReference>
<dbReference type="PANTHER" id="PTHR39563:SF1">
    <property type="entry name" value="XANTHINE-GUANINE PHOSPHORIBOSYLTRANSFERASE"/>
    <property type="match status" value="1"/>
</dbReference>
<dbReference type="Pfam" id="PF00156">
    <property type="entry name" value="Pribosyltran"/>
    <property type="match status" value="1"/>
</dbReference>
<dbReference type="SUPFAM" id="SSF53271">
    <property type="entry name" value="PRTase-like"/>
    <property type="match status" value="1"/>
</dbReference>
<dbReference type="PROSITE" id="PS00103">
    <property type="entry name" value="PUR_PYR_PR_TRANSFER"/>
    <property type="match status" value="1"/>
</dbReference>
<reference key="1">
    <citation type="journal article" date="2004" name="Environ. Microbiol.">
        <title>The genome of Desulfotalea psychrophila, a sulfate-reducing bacterium from permanently cold Arctic sediments.</title>
        <authorList>
            <person name="Rabus R."/>
            <person name="Ruepp A."/>
            <person name="Frickey T."/>
            <person name="Rattei T."/>
            <person name="Fartmann B."/>
            <person name="Stark M."/>
            <person name="Bauer M."/>
            <person name="Zibat A."/>
            <person name="Lombardot T."/>
            <person name="Becker I."/>
            <person name="Amann J."/>
            <person name="Gellner K."/>
            <person name="Teeling H."/>
            <person name="Leuschner W.D."/>
            <person name="Gloeckner F.-O."/>
            <person name="Lupas A.N."/>
            <person name="Amann R."/>
            <person name="Klenk H.-P."/>
        </authorList>
    </citation>
    <scope>NUCLEOTIDE SEQUENCE [LARGE SCALE GENOMIC DNA]</scope>
    <source>
        <strain>DSM 12343 / LSv54</strain>
    </source>
</reference>
<evidence type="ECO:0000255" key="1">
    <source>
        <dbReference type="HAMAP-Rule" id="MF_01903"/>
    </source>
</evidence>
<accession>Q6AQG4</accession>
<comment type="function">
    <text evidence="1">Purine salvage pathway enzyme that catalyzes the transfer of the ribosyl-5-phosphate group from 5-phospho-alpha-D-ribose 1-diphosphate (PRPP) to the N9 position of the 6-oxopurines guanine and xanthine to form the corresponding ribonucleotides GMP (guanosine 5'-monophosphate) and XMP (xanthosine 5'-monophosphate), with the release of PPi. To a lesser extent, also acts on hypoxanthine.</text>
</comment>
<comment type="catalytic activity">
    <reaction evidence="1">
        <text>GMP + diphosphate = guanine + 5-phospho-alpha-D-ribose 1-diphosphate</text>
        <dbReference type="Rhea" id="RHEA:25424"/>
        <dbReference type="ChEBI" id="CHEBI:16235"/>
        <dbReference type="ChEBI" id="CHEBI:33019"/>
        <dbReference type="ChEBI" id="CHEBI:58017"/>
        <dbReference type="ChEBI" id="CHEBI:58115"/>
    </reaction>
    <physiologicalReaction direction="right-to-left" evidence="1">
        <dbReference type="Rhea" id="RHEA:25426"/>
    </physiologicalReaction>
</comment>
<comment type="catalytic activity">
    <reaction evidence="1">
        <text>XMP + diphosphate = xanthine + 5-phospho-alpha-D-ribose 1-diphosphate</text>
        <dbReference type="Rhea" id="RHEA:10800"/>
        <dbReference type="ChEBI" id="CHEBI:17712"/>
        <dbReference type="ChEBI" id="CHEBI:33019"/>
        <dbReference type="ChEBI" id="CHEBI:57464"/>
        <dbReference type="ChEBI" id="CHEBI:58017"/>
        <dbReference type="EC" id="2.4.2.22"/>
    </reaction>
    <physiologicalReaction direction="right-to-left" evidence="1">
        <dbReference type="Rhea" id="RHEA:10802"/>
    </physiologicalReaction>
</comment>
<comment type="catalytic activity">
    <reaction evidence="1">
        <text>IMP + diphosphate = hypoxanthine + 5-phospho-alpha-D-ribose 1-diphosphate</text>
        <dbReference type="Rhea" id="RHEA:17973"/>
        <dbReference type="ChEBI" id="CHEBI:17368"/>
        <dbReference type="ChEBI" id="CHEBI:33019"/>
        <dbReference type="ChEBI" id="CHEBI:58017"/>
        <dbReference type="ChEBI" id="CHEBI:58053"/>
    </reaction>
    <physiologicalReaction direction="right-to-left" evidence="1">
        <dbReference type="Rhea" id="RHEA:17975"/>
    </physiologicalReaction>
</comment>
<comment type="cofactor">
    <cofactor evidence="1">
        <name>Mg(2+)</name>
        <dbReference type="ChEBI" id="CHEBI:18420"/>
    </cofactor>
</comment>
<comment type="pathway">
    <text evidence="1">Purine metabolism; GMP biosynthesis via salvage pathway; GMP from guanine: step 1/1.</text>
</comment>
<comment type="pathway">
    <text evidence="1">Purine metabolism; XMP biosynthesis via salvage pathway; XMP from xanthine: step 1/1.</text>
</comment>
<comment type="subunit">
    <text evidence="1">Homotetramer.</text>
</comment>
<comment type="subcellular location">
    <subcellularLocation>
        <location evidence="1">Cell inner membrane</location>
        <topology evidence="1">Peripheral membrane protein</topology>
    </subcellularLocation>
</comment>
<comment type="similarity">
    <text evidence="1">Belongs to the purine/pyrimidine phosphoribosyltransferase family. XGPT subfamily.</text>
</comment>
<feature type="chain" id="PRO_0000139663" description="Xanthine-guanine phosphoribosyltransferase">
    <location>
        <begin position="1"/>
        <end position="160"/>
    </location>
</feature>
<feature type="binding site" evidence="1">
    <location>
        <begin position="41"/>
        <end position="42"/>
    </location>
    <ligand>
        <name>5-phospho-alpha-D-ribose 1-diphosphate</name>
        <dbReference type="ChEBI" id="CHEBI:58017"/>
    </ligand>
</feature>
<feature type="binding site" evidence="1">
    <location>
        <begin position="93"/>
        <end position="101"/>
    </location>
    <ligand>
        <name>5-phospho-alpha-D-ribose 1-diphosphate</name>
        <dbReference type="ChEBI" id="CHEBI:58017"/>
    </ligand>
</feature>
<feature type="binding site" evidence="1">
    <location>
        <position position="94"/>
    </location>
    <ligand>
        <name>Mg(2+)</name>
        <dbReference type="ChEBI" id="CHEBI:18420"/>
    </ligand>
</feature>
<feature type="binding site" evidence="1">
    <location>
        <begin position="97"/>
        <end position="101"/>
    </location>
    <ligand>
        <name>GMP</name>
        <dbReference type="ChEBI" id="CHEBI:58115"/>
    </ligand>
</feature>
<feature type="binding site" evidence="1">
    <location>
        <position position="97"/>
    </location>
    <ligand>
        <name>guanine</name>
        <dbReference type="ChEBI" id="CHEBI:16235"/>
    </ligand>
</feature>
<feature type="binding site" evidence="1">
    <location>
        <position position="97"/>
    </location>
    <ligand>
        <name>xanthine</name>
        <dbReference type="ChEBI" id="CHEBI:17712"/>
    </ligand>
</feature>
<feature type="binding site" evidence="1">
    <location>
        <begin position="139"/>
        <end position="140"/>
    </location>
    <ligand>
        <name>GMP</name>
        <dbReference type="ChEBI" id="CHEBI:58115"/>
    </ligand>
</feature>
<feature type="binding site" evidence="1">
    <location>
        <position position="140"/>
    </location>
    <ligand>
        <name>guanine</name>
        <dbReference type="ChEBI" id="CHEBI:16235"/>
    </ligand>
</feature>
<feature type="binding site" evidence="1">
    <location>
        <position position="140"/>
    </location>
    <ligand>
        <name>xanthine</name>
        <dbReference type="ChEBI" id="CHEBI:17712"/>
    </ligand>
</feature>
<organism>
    <name type="scientific">Desulfotalea psychrophila (strain LSv54 / DSM 12343)</name>
    <dbReference type="NCBI Taxonomy" id="177439"/>
    <lineage>
        <taxon>Bacteria</taxon>
        <taxon>Pseudomonadati</taxon>
        <taxon>Thermodesulfobacteriota</taxon>
        <taxon>Desulfobulbia</taxon>
        <taxon>Desulfobulbales</taxon>
        <taxon>Desulfocapsaceae</taxon>
        <taxon>Desulfotalea</taxon>
    </lineage>
</organism>
<protein>
    <recommendedName>
        <fullName evidence="1">Xanthine-guanine phosphoribosyltransferase</fullName>
        <shortName evidence="1">XGPRT</shortName>
        <ecNumber evidence="1">2.4.2.-</ecNumber>
        <ecNumber evidence="1">2.4.2.22</ecNumber>
    </recommendedName>
    <alternativeName>
        <fullName evidence="1">Xanthine phosphoribosyltransferase</fullName>
    </alternativeName>
</protein>
<gene>
    <name evidence="1" type="primary">gpt</name>
    <name type="ordered locus">DP0680</name>
</gene>
<sequence>MSDQYKRTYPISWDQLHRDSKALAWRLLDKDFFKGIIAITRGGMVPAAIIARELDIHLIDTICISSYDWKEKKGEADILKGFDGDGEGWLLIDDLVDTGRTAEVVKNLIPKAHFATVYAKPSGRPLVDTFVTEVSQDTWILFPWDTESQFAAPLIGREQR</sequence>
<keyword id="KW-0997">Cell inner membrane</keyword>
<keyword id="KW-1003">Cell membrane</keyword>
<keyword id="KW-0328">Glycosyltransferase</keyword>
<keyword id="KW-0460">Magnesium</keyword>
<keyword id="KW-0472">Membrane</keyword>
<keyword id="KW-0479">Metal-binding</keyword>
<keyword id="KW-0660">Purine salvage</keyword>
<keyword id="KW-1185">Reference proteome</keyword>
<keyword id="KW-0808">Transferase</keyword>
<proteinExistence type="inferred from homology"/>
<name>XGPT_DESPS</name>